<proteinExistence type="inferred from homology"/>
<name>HEM1_METLZ</name>
<dbReference type="EC" id="1.2.1.70" evidence="1"/>
<dbReference type="EMBL" id="CP000559">
    <property type="protein sequence ID" value="ABN06697.1"/>
    <property type="molecule type" value="Genomic_DNA"/>
</dbReference>
<dbReference type="RefSeq" id="WP_011832898.1">
    <property type="nucleotide sequence ID" value="NC_008942.1"/>
</dbReference>
<dbReference type="SMR" id="A2SQU1"/>
<dbReference type="STRING" id="410358.Mlab_0523"/>
<dbReference type="GeneID" id="4795403"/>
<dbReference type="KEGG" id="mla:Mlab_0523"/>
<dbReference type="eggNOG" id="arCOG01036">
    <property type="taxonomic scope" value="Archaea"/>
</dbReference>
<dbReference type="HOGENOM" id="CLU_035113_0_0_2"/>
<dbReference type="OrthoDB" id="4562at2157"/>
<dbReference type="UniPathway" id="UPA00251">
    <property type="reaction ID" value="UER00316"/>
</dbReference>
<dbReference type="Proteomes" id="UP000000365">
    <property type="component" value="Chromosome"/>
</dbReference>
<dbReference type="GO" id="GO:0008883">
    <property type="term" value="F:glutamyl-tRNA reductase activity"/>
    <property type="evidence" value="ECO:0007669"/>
    <property type="project" value="UniProtKB-UniRule"/>
</dbReference>
<dbReference type="GO" id="GO:0050661">
    <property type="term" value="F:NADP binding"/>
    <property type="evidence" value="ECO:0007669"/>
    <property type="project" value="InterPro"/>
</dbReference>
<dbReference type="GO" id="GO:0019353">
    <property type="term" value="P:protoporphyrinogen IX biosynthetic process from glutamate"/>
    <property type="evidence" value="ECO:0007669"/>
    <property type="project" value="TreeGrafter"/>
</dbReference>
<dbReference type="CDD" id="cd05213">
    <property type="entry name" value="NAD_bind_Glutamyl_tRNA_reduct"/>
    <property type="match status" value="1"/>
</dbReference>
<dbReference type="FunFam" id="3.40.50.720:FF:000031">
    <property type="entry name" value="Glutamyl-tRNA reductase"/>
    <property type="match status" value="1"/>
</dbReference>
<dbReference type="Gene3D" id="3.30.460.30">
    <property type="entry name" value="Glutamyl-tRNA reductase, N-terminal domain"/>
    <property type="match status" value="1"/>
</dbReference>
<dbReference type="Gene3D" id="3.40.50.720">
    <property type="entry name" value="NAD(P)-binding Rossmann-like Domain"/>
    <property type="match status" value="1"/>
</dbReference>
<dbReference type="HAMAP" id="MF_00087">
    <property type="entry name" value="Glu_tRNA_reductase"/>
    <property type="match status" value="1"/>
</dbReference>
<dbReference type="InterPro" id="IPR000343">
    <property type="entry name" value="4pyrrol_synth_GluRdtase"/>
</dbReference>
<dbReference type="InterPro" id="IPR015896">
    <property type="entry name" value="4pyrrol_synth_GluRdtase_dimer"/>
</dbReference>
<dbReference type="InterPro" id="IPR015895">
    <property type="entry name" value="4pyrrol_synth_GluRdtase_N"/>
</dbReference>
<dbReference type="InterPro" id="IPR036453">
    <property type="entry name" value="GluRdtase_dimer_dom_sf"/>
</dbReference>
<dbReference type="InterPro" id="IPR036343">
    <property type="entry name" value="GluRdtase_N_sf"/>
</dbReference>
<dbReference type="InterPro" id="IPR036291">
    <property type="entry name" value="NAD(P)-bd_dom_sf"/>
</dbReference>
<dbReference type="InterPro" id="IPR006151">
    <property type="entry name" value="Shikm_DH/Glu-tRNA_Rdtase"/>
</dbReference>
<dbReference type="NCBIfam" id="TIGR01035">
    <property type="entry name" value="hemA"/>
    <property type="match status" value="1"/>
</dbReference>
<dbReference type="PANTHER" id="PTHR43013">
    <property type="entry name" value="GLUTAMYL-TRNA REDUCTASE"/>
    <property type="match status" value="1"/>
</dbReference>
<dbReference type="PANTHER" id="PTHR43013:SF1">
    <property type="entry name" value="GLUTAMYL-TRNA REDUCTASE"/>
    <property type="match status" value="1"/>
</dbReference>
<dbReference type="Pfam" id="PF00745">
    <property type="entry name" value="GlutR_dimer"/>
    <property type="match status" value="1"/>
</dbReference>
<dbReference type="Pfam" id="PF05201">
    <property type="entry name" value="GlutR_N"/>
    <property type="match status" value="1"/>
</dbReference>
<dbReference type="Pfam" id="PF01488">
    <property type="entry name" value="Shikimate_DH"/>
    <property type="match status" value="1"/>
</dbReference>
<dbReference type="PIRSF" id="PIRSF000445">
    <property type="entry name" value="4pyrrol_synth_GluRdtase"/>
    <property type="match status" value="1"/>
</dbReference>
<dbReference type="SUPFAM" id="SSF69742">
    <property type="entry name" value="Glutamyl tRNA-reductase catalytic, N-terminal domain"/>
    <property type="match status" value="1"/>
</dbReference>
<dbReference type="SUPFAM" id="SSF69075">
    <property type="entry name" value="Glutamyl tRNA-reductase dimerization domain"/>
    <property type="match status" value="1"/>
</dbReference>
<dbReference type="SUPFAM" id="SSF51735">
    <property type="entry name" value="NAD(P)-binding Rossmann-fold domains"/>
    <property type="match status" value="1"/>
</dbReference>
<gene>
    <name evidence="1" type="primary">hemA</name>
    <name type="ordered locus">Mlab_0523</name>
</gene>
<keyword id="KW-0521">NADP</keyword>
<keyword id="KW-0560">Oxidoreductase</keyword>
<keyword id="KW-0627">Porphyrin biosynthesis</keyword>
<keyword id="KW-1185">Reference proteome</keyword>
<evidence type="ECO:0000255" key="1">
    <source>
        <dbReference type="HAMAP-Rule" id="MF_00087"/>
    </source>
</evidence>
<comment type="function">
    <text evidence="1">Catalyzes the NADPH-dependent reduction of glutamyl-tRNA(Glu) to glutamate 1-semialdehyde (GSA).</text>
</comment>
<comment type="catalytic activity">
    <reaction evidence="1">
        <text>(S)-4-amino-5-oxopentanoate + tRNA(Glu) + NADP(+) = L-glutamyl-tRNA(Glu) + NADPH + H(+)</text>
        <dbReference type="Rhea" id="RHEA:12344"/>
        <dbReference type="Rhea" id="RHEA-COMP:9663"/>
        <dbReference type="Rhea" id="RHEA-COMP:9680"/>
        <dbReference type="ChEBI" id="CHEBI:15378"/>
        <dbReference type="ChEBI" id="CHEBI:57501"/>
        <dbReference type="ChEBI" id="CHEBI:57783"/>
        <dbReference type="ChEBI" id="CHEBI:58349"/>
        <dbReference type="ChEBI" id="CHEBI:78442"/>
        <dbReference type="ChEBI" id="CHEBI:78520"/>
        <dbReference type="EC" id="1.2.1.70"/>
    </reaction>
</comment>
<comment type="pathway">
    <text evidence="1">Porphyrin-containing compound metabolism; protoporphyrin-IX biosynthesis; 5-aminolevulinate from L-glutamyl-tRNA(Glu): step 1/2.</text>
</comment>
<comment type="subunit">
    <text evidence="1">Homodimer.</text>
</comment>
<comment type="domain">
    <text evidence="1">Possesses an unusual extended V-shaped dimeric structure with each monomer consisting of three distinct domains arranged along a curved 'spinal' alpha-helix. The N-terminal catalytic domain specifically recognizes the glutamate moiety of the substrate. The second domain is the NADPH-binding domain, and the third C-terminal domain is responsible for dimerization.</text>
</comment>
<comment type="miscellaneous">
    <text evidence="1">During catalysis, the active site Cys acts as a nucleophile attacking the alpha-carbonyl group of tRNA-bound glutamate with the formation of a thioester intermediate between enzyme and glutamate, and the concomitant release of tRNA(Glu). The thioester intermediate is finally reduced by direct hydride transfer from NADPH, to form the product GSA.</text>
</comment>
<comment type="similarity">
    <text evidence="1">Belongs to the glutamyl-tRNA reductase family.</text>
</comment>
<feature type="chain" id="PRO_0000335091" description="Glutamyl-tRNA reductase">
    <location>
        <begin position="1"/>
        <end position="424"/>
    </location>
</feature>
<feature type="active site" description="Nucleophile" evidence="1">
    <location>
        <position position="52"/>
    </location>
</feature>
<feature type="binding site" evidence="1">
    <location>
        <begin position="51"/>
        <end position="54"/>
    </location>
    <ligand>
        <name>substrate</name>
    </ligand>
</feature>
<feature type="binding site" evidence="1">
    <location>
        <position position="99"/>
    </location>
    <ligand>
        <name>substrate</name>
    </ligand>
</feature>
<feature type="binding site" evidence="1">
    <location>
        <begin position="104"/>
        <end position="106"/>
    </location>
    <ligand>
        <name>substrate</name>
    </ligand>
</feature>
<feature type="binding site" evidence="1">
    <location>
        <position position="110"/>
    </location>
    <ligand>
        <name>substrate</name>
    </ligand>
</feature>
<feature type="binding site" evidence="1">
    <location>
        <begin position="179"/>
        <end position="184"/>
    </location>
    <ligand>
        <name>NADP(+)</name>
        <dbReference type="ChEBI" id="CHEBI:58349"/>
    </ligand>
</feature>
<feature type="site" description="Important for activity" evidence="1">
    <location>
        <position position="89"/>
    </location>
</feature>
<protein>
    <recommendedName>
        <fullName evidence="1">Glutamyl-tRNA reductase</fullName>
        <shortName evidence="1">GluTR</shortName>
        <ecNumber evidence="1">1.2.1.70</ecNumber>
    </recommendedName>
</protein>
<sequence>MTRTLLTDIAVATADHSKYGEEVLGLFRFKDETAFFEKASKIFPGVVLLETCNRVEILVHGSAKQLRDFLHGEQRFGFDILEGEAALMHLLELAAGTKSMIIGEDQILGQMRRALLLAESHDTNDVITDVCLNTAIREGVSIRQKTSINKGAVSIGSAAVLLAEELMGDLDGKNILVVGGGEMGTLVARALCEKNLRAIYVTNRSFDRAVLLAEEIKGRAMRLDQLYPCIALSDVVISCTGAPHLIIHADELAETMNERFWPLDLEPRHLLLIDIAQPRDIDDACRDVPGVSLKTLDDLKSISEKNLAARKTECEHADVLVKAALPEFIKAFNRAASGDLTKNLYTWAEEIRQREKNKALSRLRDADPYLESVIDDLTSALTKKLLEDAAKSIRASAECTDTQTAEILLKAIISGEVSCIRRSE</sequence>
<accession>A2SQU1</accession>
<organism>
    <name type="scientific">Methanocorpusculum labreanum (strain ATCC 43576 / DSM 4855 / Z)</name>
    <dbReference type="NCBI Taxonomy" id="410358"/>
    <lineage>
        <taxon>Archaea</taxon>
        <taxon>Methanobacteriati</taxon>
        <taxon>Methanobacteriota</taxon>
        <taxon>Stenosarchaea group</taxon>
        <taxon>Methanomicrobia</taxon>
        <taxon>Methanomicrobiales</taxon>
        <taxon>Methanocorpusculaceae</taxon>
        <taxon>Methanocorpusculum</taxon>
    </lineage>
</organism>
<reference key="1">
    <citation type="journal article" date="2009" name="Stand. Genomic Sci.">
        <title>Complete genome sequence of Methanocorpusculum labreanum type strain Z.</title>
        <authorList>
            <person name="Anderson I.J."/>
            <person name="Sieprawska-Lupa M."/>
            <person name="Goltsman E."/>
            <person name="Lapidus A."/>
            <person name="Copeland A."/>
            <person name="Glavina Del Rio T."/>
            <person name="Tice H."/>
            <person name="Dalin E."/>
            <person name="Barry K."/>
            <person name="Pitluck S."/>
            <person name="Hauser L."/>
            <person name="Land M."/>
            <person name="Lucas S."/>
            <person name="Richardson P."/>
            <person name="Whitman W.B."/>
            <person name="Kyrpides N.C."/>
        </authorList>
    </citation>
    <scope>NUCLEOTIDE SEQUENCE [LARGE SCALE GENOMIC DNA]</scope>
    <source>
        <strain>ATCC 43576 / DSM 4855 / Z</strain>
    </source>
</reference>